<sequence length="170" mass="18942">MDIEKVNSMDFGEFVDVFGNVIERCPLIAAAVWSKRPFSGLGDLEKHFFAFIDGLPLSGQEGVLRCHPELAGRQLPWGRLTAESQREQSAAGLQNLGAAERLRFTELTAQYRTRFGFPFVLALRLSDPAAAPRELARRLRCPPAQELRTALGEVKKICHLRLANLLGEQP</sequence>
<dbReference type="EC" id="4.1.1.97"/>
<dbReference type="EMBL" id="BC142055">
    <property type="protein sequence ID" value="AAI42056.1"/>
    <property type="molecule type" value="mRNA"/>
</dbReference>
<dbReference type="RefSeq" id="NP_001093173.1">
    <property type="nucleotide sequence ID" value="NM_001099703.2"/>
</dbReference>
<dbReference type="SMR" id="A5PJD0"/>
<dbReference type="FunCoup" id="A5PJD0">
    <property type="interactions" value="26"/>
</dbReference>
<dbReference type="STRING" id="9913.ENSBTAP00000018362"/>
<dbReference type="PaxDb" id="9913-ENSBTAP00000018362"/>
<dbReference type="GeneID" id="518364"/>
<dbReference type="KEGG" id="bta:518364"/>
<dbReference type="CTD" id="646625"/>
<dbReference type="eggNOG" id="KOG0848">
    <property type="taxonomic scope" value="Eukaryota"/>
</dbReference>
<dbReference type="InParanoid" id="A5PJD0"/>
<dbReference type="OrthoDB" id="9970124at2759"/>
<dbReference type="UniPathway" id="UPA00394">
    <property type="reaction ID" value="UER00652"/>
</dbReference>
<dbReference type="Proteomes" id="UP000009136">
    <property type="component" value="Unplaced"/>
</dbReference>
<dbReference type="GO" id="GO:0005777">
    <property type="term" value="C:peroxisome"/>
    <property type="evidence" value="ECO:0000318"/>
    <property type="project" value="GO_Central"/>
</dbReference>
<dbReference type="GO" id="GO:0051997">
    <property type="term" value="F:2-oxo-4-hydroxy-4-carboxy-5-ureidoimidazoline decarboxylase activity"/>
    <property type="evidence" value="ECO:0000318"/>
    <property type="project" value="GO_Central"/>
</dbReference>
<dbReference type="GO" id="GO:0000255">
    <property type="term" value="P:allantoin metabolic process"/>
    <property type="evidence" value="ECO:0007669"/>
    <property type="project" value="InterPro"/>
</dbReference>
<dbReference type="GO" id="GO:0006144">
    <property type="term" value="P:purine nucleobase metabolic process"/>
    <property type="evidence" value="ECO:0007669"/>
    <property type="project" value="UniProtKB-KW"/>
</dbReference>
<dbReference type="GO" id="GO:0019628">
    <property type="term" value="P:urate catabolic process"/>
    <property type="evidence" value="ECO:0000318"/>
    <property type="project" value="GO_Central"/>
</dbReference>
<dbReference type="FunFam" id="1.10.3330.10:FF:000001">
    <property type="entry name" value="2-oxo-4-hydroxy-4-carboxy-5-ureidoimidazoline decarboxylase"/>
    <property type="match status" value="1"/>
</dbReference>
<dbReference type="Gene3D" id="1.10.3330.10">
    <property type="entry name" value="Oxo-4-hydroxy-4-carboxy-5-ureidoimidazoline decarboxylase"/>
    <property type="match status" value="1"/>
</dbReference>
<dbReference type="InterPro" id="IPR018020">
    <property type="entry name" value="OHCU_decarboxylase"/>
</dbReference>
<dbReference type="InterPro" id="IPR017580">
    <property type="entry name" value="OHCU_decarboxylase-1"/>
</dbReference>
<dbReference type="InterPro" id="IPR036778">
    <property type="entry name" value="OHCU_decarboxylase_sf"/>
</dbReference>
<dbReference type="NCBIfam" id="TIGR03164">
    <property type="entry name" value="UHCUDC"/>
    <property type="match status" value="1"/>
</dbReference>
<dbReference type="PANTHER" id="PTHR43466">
    <property type="entry name" value="2-OXO-4-HYDROXY-4-CARBOXY-5-UREIDOIMIDAZOLINE DECARBOXYLASE-RELATED"/>
    <property type="match status" value="1"/>
</dbReference>
<dbReference type="PANTHER" id="PTHR43466:SF1">
    <property type="entry name" value="2-OXO-4-HYDROXY-4-CARBOXY-5-UREIDOIMIDAZOLINE DECARBOXYLASE-RELATED"/>
    <property type="match status" value="1"/>
</dbReference>
<dbReference type="Pfam" id="PF09349">
    <property type="entry name" value="OHCU_decarbox"/>
    <property type="match status" value="1"/>
</dbReference>
<dbReference type="SUPFAM" id="SSF158694">
    <property type="entry name" value="UraD-Like"/>
    <property type="match status" value="1"/>
</dbReference>
<feature type="chain" id="PRO_0000315239" description="2-oxo-4-hydroxy-4-carboxy-5-ureidoimidazoline decarboxylase">
    <location>
        <begin position="1"/>
        <end position="170"/>
    </location>
</feature>
<feature type="active site" description="Proton donor" evidence="1">
    <location>
        <position position="67"/>
    </location>
</feature>
<feature type="binding site" evidence="1">
    <location>
        <position position="68"/>
    </location>
    <ligand>
        <name>substrate</name>
    </ligand>
</feature>
<feature type="binding site" evidence="1">
    <location>
        <begin position="84"/>
        <end position="88"/>
    </location>
    <ligand>
        <name>substrate</name>
    </ligand>
</feature>
<feature type="binding site" evidence="1">
    <location>
        <begin position="119"/>
        <end position="123"/>
    </location>
    <ligand>
        <name>substrate</name>
    </ligand>
</feature>
<reference key="1">
    <citation type="submission" date="2007-06" db="EMBL/GenBank/DDBJ databases">
        <authorList>
            <consortium name="NIH - Mammalian Gene Collection (MGC) project"/>
        </authorList>
    </citation>
    <scope>NUCLEOTIDE SEQUENCE [LARGE SCALE MRNA]</scope>
    <source>
        <strain>Hereford</strain>
        <tissue>Testis</tissue>
    </source>
</reference>
<name>URAD_BOVIN</name>
<protein>
    <recommendedName>
        <fullName>2-oxo-4-hydroxy-4-carboxy-5-ureidoimidazoline decarboxylase</fullName>
        <shortName>OHCU decarboxylase</shortName>
        <ecNumber>4.1.1.97</ecNumber>
    </recommendedName>
    <alternativeName>
        <fullName>Parahox neighbor</fullName>
    </alternativeName>
    <alternativeName>
        <fullName>Ureidoimidazoline (2-oxo-4-hydroxy-4-carboxy-5-) decarboxylase</fullName>
    </alternativeName>
</protein>
<comment type="function">
    <text evidence="1">Catalyzes the stereoselective decarboxylation of 2-oxo-4-hydroxy-4-carboxy-5-ureidoimidazoline (OHCU) to (S)-allantoin.</text>
</comment>
<comment type="catalytic activity">
    <reaction>
        <text>5-hydroxy-2-oxo-4-ureido-2,5-dihydro-1H-imidazole-5-carboxylate + H(+) = (S)-allantoin + CO2</text>
        <dbReference type="Rhea" id="RHEA:26301"/>
        <dbReference type="ChEBI" id="CHEBI:15378"/>
        <dbReference type="ChEBI" id="CHEBI:15678"/>
        <dbReference type="ChEBI" id="CHEBI:16526"/>
        <dbReference type="ChEBI" id="CHEBI:58639"/>
        <dbReference type="EC" id="4.1.1.97"/>
    </reaction>
</comment>
<comment type="pathway">
    <text>Purine metabolism; urate degradation; (S)-allantoin from urate: step 3/3.</text>
</comment>
<comment type="subcellular location">
    <subcellularLocation>
        <location evidence="2">Peroxisome</location>
    </subcellularLocation>
</comment>
<comment type="similarity">
    <text evidence="2">Belongs to the OHCU decarboxylase family.</text>
</comment>
<keyword id="KW-0210">Decarboxylase</keyword>
<keyword id="KW-0456">Lyase</keyword>
<keyword id="KW-0576">Peroxisome</keyword>
<keyword id="KW-0659">Purine metabolism</keyword>
<keyword id="KW-1185">Reference proteome</keyword>
<gene>
    <name type="primary">URAD</name>
    <name type="synonym">PRHOXNB</name>
</gene>
<proteinExistence type="evidence at transcript level"/>
<evidence type="ECO:0000250" key="1"/>
<evidence type="ECO:0000305" key="2"/>
<accession>A5PJD0</accession>
<organism>
    <name type="scientific">Bos taurus</name>
    <name type="common">Bovine</name>
    <dbReference type="NCBI Taxonomy" id="9913"/>
    <lineage>
        <taxon>Eukaryota</taxon>
        <taxon>Metazoa</taxon>
        <taxon>Chordata</taxon>
        <taxon>Craniata</taxon>
        <taxon>Vertebrata</taxon>
        <taxon>Euteleostomi</taxon>
        <taxon>Mammalia</taxon>
        <taxon>Eutheria</taxon>
        <taxon>Laurasiatheria</taxon>
        <taxon>Artiodactyla</taxon>
        <taxon>Ruminantia</taxon>
        <taxon>Pecora</taxon>
        <taxon>Bovidae</taxon>
        <taxon>Bovinae</taxon>
        <taxon>Bos</taxon>
    </lineage>
</organism>